<sequence>IGMVAECKDGYLVGDDGCKMHCFTRPGHYCASECSRVKGKDGYCYAWLACYCYNMPNWAPIWNSATNSCGKGK</sequence>
<proteinExistence type="evidence at transcript level"/>
<comment type="function">
    <text evidence="1">Beta toxins bind voltage-independently at site-4 of sodium channels (Nav) and shift the voltage of activation toward more negative potentials thereby affecting sodium channel activation and promoting spontaneous and repetitive firing.</text>
</comment>
<comment type="subcellular location">
    <subcellularLocation>
        <location>Secreted</location>
    </subcellularLocation>
</comment>
<comment type="tissue specificity">
    <text>Expressed by the venom gland.</text>
</comment>
<comment type="domain">
    <text evidence="3">Has the structural arrangement of an alpha-helix connected to antiparallel beta-sheets by disulfide bonds (CS-alpha/beta).</text>
</comment>
<comment type="miscellaneous">
    <text evidence="1">Negative results: does not affect the cardiac Nav1.5/SCN5A, the peripheral nerve channel Nav1.7/SCN9A, and the voltage-dependent potassium channel Kv1.5/KCNA5.</text>
</comment>
<comment type="similarity">
    <text evidence="3">Belongs to the long (4 C-C) scorpion toxin superfamily. Sodium channel inhibitor family. Beta subfamily.</text>
</comment>
<dbReference type="EMBL" id="DQ075228">
    <property type="protein sequence ID" value="AAZ29707.1"/>
    <property type="molecule type" value="mRNA"/>
</dbReference>
<dbReference type="SMR" id="Q1I178"/>
<dbReference type="GO" id="GO:0005576">
    <property type="term" value="C:extracellular region"/>
    <property type="evidence" value="ECO:0007669"/>
    <property type="project" value="UniProtKB-SubCell"/>
</dbReference>
<dbReference type="GO" id="GO:0019871">
    <property type="term" value="F:sodium channel inhibitor activity"/>
    <property type="evidence" value="ECO:0007669"/>
    <property type="project" value="InterPro"/>
</dbReference>
<dbReference type="GO" id="GO:0090729">
    <property type="term" value="F:toxin activity"/>
    <property type="evidence" value="ECO:0007669"/>
    <property type="project" value="UniProtKB-KW"/>
</dbReference>
<dbReference type="GO" id="GO:0006952">
    <property type="term" value="P:defense response"/>
    <property type="evidence" value="ECO:0007669"/>
    <property type="project" value="InterPro"/>
</dbReference>
<dbReference type="CDD" id="cd23106">
    <property type="entry name" value="neurotoxins_LC_scorpion"/>
    <property type="match status" value="1"/>
</dbReference>
<dbReference type="FunFam" id="3.30.30.10:FF:000002">
    <property type="entry name" value="Alpha-like toxin BmK-M1"/>
    <property type="match status" value="1"/>
</dbReference>
<dbReference type="Gene3D" id="3.30.30.10">
    <property type="entry name" value="Knottin, scorpion toxin-like"/>
    <property type="match status" value="1"/>
</dbReference>
<dbReference type="InterPro" id="IPR044062">
    <property type="entry name" value="LCN-type_CS_alpha_beta_dom"/>
</dbReference>
<dbReference type="InterPro" id="IPR003614">
    <property type="entry name" value="Scorpion_toxin-like"/>
</dbReference>
<dbReference type="InterPro" id="IPR036574">
    <property type="entry name" value="Scorpion_toxin-like_sf"/>
</dbReference>
<dbReference type="InterPro" id="IPR018218">
    <property type="entry name" value="Scorpion_toxinL"/>
</dbReference>
<dbReference type="InterPro" id="IPR002061">
    <property type="entry name" value="Scorpion_toxinL/defensin"/>
</dbReference>
<dbReference type="Pfam" id="PF00537">
    <property type="entry name" value="Toxin_3"/>
    <property type="match status" value="1"/>
</dbReference>
<dbReference type="PRINTS" id="PR00285">
    <property type="entry name" value="SCORPNTOXIN"/>
</dbReference>
<dbReference type="SMART" id="SM00505">
    <property type="entry name" value="Knot1"/>
    <property type="match status" value="1"/>
</dbReference>
<dbReference type="SUPFAM" id="SSF57095">
    <property type="entry name" value="Scorpion toxin-like"/>
    <property type="match status" value="1"/>
</dbReference>
<dbReference type="PROSITE" id="PS51863">
    <property type="entry name" value="LCN_CSAB"/>
    <property type="match status" value="1"/>
</dbReference>
<feature type="signal peptide" evidence="1">
    <location>
        <begin position="1" status="less than"/>
        <end position="7"/>
    </location>
</feature>
<feature type="chain" id="PRO_0000253772" description="Toxin Td9">
    <location>
        <begin position="8"/>
        <end position="71"/>
    </location>
</feature>
<feature type="domain" description="LCN-type CS-alpha/beta" evidence="2">
    <location>
        <begin position="8"/>
        <end position="70"/>
    </location>
</feature>
<feature type="modified residue" description="Lysine amide" evidence="1">
    <location>
        <position position="71"/>
    </location>
</feature>
<feature type="disulfide bond" evidence="2">
    <location>
        <begin position="18"/>
        <end position="69"/>
    </location>
</feature>
<feature type="disulfide bond" evidence="2">
    <location>
        <begin position="22"/>
        <end position="44"/>
    </location>
</feature>
<feature type="disulfide bond" evidence="2">
    <location>
        <begin position="30"/>
        <end position="50"/>
    </location>
</feature>
<feature type="disulfide bond" evidence="2">
    <location>
        <begin position="34"/>
        <end position="52"/>
    </location>
</feature>
<feature type="non-terminal residue">
    <location>
        <position position="1"/>
    </location>
</feature>
<name>SCX9_TITDI</name>
<reference key="1">
    <citation type="journal article" date="2006" name="Comp. Biochem. Physiol.">
        <title>Diversity of long-chain toxins in Tityus zulianus and Tityus discrepans venoms (Scorpiones, Buthidae): molecular, immunological, and mass spectral analyses.</title>
        <authorList>
            <person name="Borges A."/>
            <person name="Garcia C.C."/>
            <person name="Lugo E."/>
            <person name="Alfonzo M.J."/>
            <person name="Jowers M.J."/>
            <person name="Op den Camp H.J.M."/>
        </authorList>
    </citation>
    <scope>NUCLEOTIDE SEQUENCE [MRNA]</scope>
    <source>
        <tissue>Venom gland</tissue>
    </source>
</reference>
<reference key="2">
    <citation type="journal article" date="2012" name="PLoS ONE">
        <title>Identification and phylogenetic analysis of Tityus pachyurus and Tityus obscurus novel putative Na+-channel scorpion toxins.</title>
        <authorList>
            <person name="Guerrero-Vargas J.A."/>
            <person name="Mourao C.B."/>
            <person name="Quintero-Hernandez V."/>
            <person name="Possani L.D."/>
            <person name="Schwartz E.F."/>
        </authorList>
    </citation>
    <scope>NOMENCLATURE</scope>
</reference>
<accession>Q1I178</accession>
<evidence type="ECO:0000250" key="1"/>
<evidence type="ECO:0000255" key="2">
    <source>
        <dbReference type="PROSITE-ProRule" id="PRU01210"/>
    </source>
</evidence>
<evidence type="ECO:0000305" key="3"/>
<organism>
    <name type="scientific">Tityus discrepans</name>
    <name type="common">Venezuelan scorpion</name>
    <dbReference type="NCBI Taxonomy" id="57059"/>
    <lineage>
        <taxon>Eukaryota</taxon>
        <taxon>Metazoa</taxon>
        <taxon>Ecdysozoa</taxon>
        <taxon>Arthropoda</taxon>
        <taxon>Chelicerata</taxon>
        <taxon>Arachnida</taxon>
        <taxon>Scorpiones</taxon>
        <taxon>Buthida</taxon>
        <taxon>Buthoidea</taxon>
        <taxon>Buthidae</taxon>
        <taxon>Tityus</taxon>
    </lineage>
</organism>
<protein>
    <recommendedName>
        <fullName>Toxin Td9</fullName>
    </recommendedName>
    <alternativeName>
        <fullName>T-beta* NaTx14.7</fullName>
    </alternativeName>
</protein>
<keyword id="KW-0027">Amidation</keyword>
<keyword id="KW-1015">Disulfide bond</keyword>
<keyword id="KW-0872">Ion channel impairing toxin</keyword>
<keyword id="KW-0528">Neurotoxin</keyword>
<keyword id="KW-0964">Secreted</keyword>
<keyword id="KW-0732">Signal</keyword>
<keyword id="KW-0800">Toxin</keyword>
<keyword id="KW-0738">Voltage-gated sodium channel impairing toxin</keyword>